<organism>
    <name type="scientific">Schizosaccharomyces pombe (strain 972 / ATCC 24843)</name>
    <name type="common">Fission yeast</name>
    <dbReference type="NCBI Taxonomy" id="284812"/>
    <lineage>
        <taxon>Eukaryota</taxon>
        <taxon>Fungi</taxon>
        <taxon>Dikarya</taxon>
        <taxon>Ascomycota</taxon>
        <taxon>Taphrinomycotina</taxon>
        <taxon>Schizosaccharomycetes</taxon>
        <taxon>Schizosaccharomycetales</taxon>
        <taxon>Schizosaccharomycetaceae</taxon>
        <taxon>Schizosaccharomyces</taxon>
    </lineage>
</organism>
<feature type="chain" id="PRO_0000116723" description="Autophagy protein 13">
    <location>
        <begin position="1"/>
        <end position="758"/>
    </location>
</feature>
<feature type="region of interest" description="Disordered" evidence="1">
    <location>
        <begin position="1"/>
        <end position="23"/>
    </location>
</feature>
<feature type="region of interest" description="Disordered" evidence="1">
    <location>
        <begin position="285"/>
        <end position="307"/>
    </location>
</feature>
<feature type="region of interest" description="Disordered" evidence="1">
    <location>
        <begin position="600"/>
        <end position="640"/>
    </location>
</feature>
<feature type="compositionally biased region" description="Polar residues" evidence="1">
    <location>
        <begin position="600"/>
        <end position="631"/>
    </location>
</feature>
<feature type="mutagenesis site" description="Impairs the interaction with atg101; when associated with R-187." evidence="7">
    <original>T</original>
    <variation>R</variation>
    <location>
        <position position="183"/>
    </location>
</feature>
<feature type="mutagenesis site" description="Impairs the interaction with atg101; when associated with R-183." evidence="7">
    <original>L</original>
    <variation>R</variation>
    <location>
        <position position="187"/>
    </location>
</feature>
<feature type="helix" evidence="11">
    <location>
        <begin position="36"/>
        <end position="57"/>
    </location>
</feature>
<feature type="helix" evidence="11">
    <location>
        <begin position="77"/>
        <end position="79"/>
    </location>
</feature>
<feature type="strand" evidence="11">
    <location>
        <begin position="80"/>
        <end position="82"/>
    </location>
</feature>
<feature type="helix" evidence="11">
    <location>
        <begin position="86"/>
        <end position="97"/>
    </location>
</feature>
<feature type="turn" evidence="11">
    <location>
        <begin position="102"/>
        <end position="104"/>
    </location>
</feature>
<feature type="strand" evidence="11">
    <location>
        <begin position="109"/>
        <end position="113"/>
    </location>
</feature>
<feature type="strand" evidence="11">
    <location>
        <begin position="150"/>
        <end position="157"/>
    </location>
</feature>
<feature type="helix" evidence="11">
    <location>
        <begin position="167"/>
        <end position="185"/>
    </location>
</feature>
<feature type="helix" evidence="11">
    <location>
        <begin position="189"/>
        <end position="199"/>
    </location>
</feature>
<feature type="strand" evidence="11">
    <location>
        <begin position="211"/>
        <end position="215"/>
    </location>
</feature>
<feature type="strand" evidence="11">
    <location>
        <begin position="222"/>
        <end position="224"/>
    </location>
</feature>
<feature type="strand" evidence="11">
    <location>
        <begin position="238"/>
        <end position="242"/>
    </location>
</feature>
<feature type="strand" evidence="11">
    <location>
        <begin position="246"/>
        <end position="248"/>
    </location>
</feature>
<feature type="strand" evidence="11">
    <location>
        <begin position="251"/>
        <end position="261"/>
    </location>
</feature>
<dbReference type="EMBL" id="CU329670">
    <property type="protein sequence ID" value="CAB11710.1"/>
    <property type="molecule type" value="Genomic_DNA"/>
</dbReference>
<dbReference type="EMBL" id="AB027916">
    <property type="protein sequence ID" value="BAA87220.1"/>
    <property type="molecule type" value="Genomic_DNA"/>
</dbReference>
<dbReference type="PIR" id="T38811">
    <property type="entry name" value="T38811"/>
</dbReference>
<dbReference type="RefSeq" id="NP_594750.1">
    <property type="nucleotide sequence ID" value="NM_001020177.2"/>
</dbReference>
<dbReference type="PDB" id="4YK8">
    <property type="method" value="X-ray"/>
    <property type="resolution" value="3.00 A"/>
    <property type="chains" value="B=32-269"/>
</dbReference>
<dbReference type="PDBsum" id="4YK8"/>
<dbReference type="SMR" id="O36019"/>
<dbReference type="BioGRID" id="279845">
    <property type="interactions" value="76"/>
</dbReference>
<dbReference type="ComplexPortal" id="CPX-25773">
    <property type="entry name" value="Atg1/ULK1 protein kinase complex"/>
</dbReference>
<dbReference type="DIP" id="DIP-61609N"/>
<dbReference type="FunCoup" id="O36019">
    <property type="interactions" value="94"/>
</dbReference>
<dbReference type="IntAct" id="O36019">
    <property type="interactions" value="1"/>
</dbReference>
<dbReference type="STRING" id="284812.O36019"/>
<dbReference type="iPTMnet" id="O36019"/>
<dbReference type="PaxDb" id="4896-SPAC4F10.07c.1"/>
<dbReference type="EnsemblFungi" id="SPAC4F10.07c.1">
    <property type="protein sequence ID" value="SPAC4F10.07c.1:pep"/>
    <property type="gene ID" value="SPAC4F10.07c"/>
</dbReference>
<dbReference type="GeneID" id="2543425"/>
<dbReference type="KEGG" id="spo:2543425"/>
<dbReference type="PomBase" id="SPAC4F10.07c">
    <property type="gene designation" value="atg13"/>
</dbReference>
<dbReference type="VEuPathDB" id="FungiDB:SPAC4F10.07c"/>
<dbReference type="eggNOG" id="KOG4573">
    <property type="taxonomic scope" value="Eukaryota"/>
</dbReference>
<dbReference type="HOGENOM" id="CLU_365689_0_0_1"/>
<dbReference type="InParanoid" id="O36019"/>
<dbReference type="OMA" id="VIHHCFY"/>
<dbReference type="PhylomeDB" id="O36019"/>
<dbReference type="Reactome" id="R-SPO-1632852">
    <property type="pathway name" value="Macroautophagy"/>
</dbReference>
<dbReference type="EvolutionaryTrace" id="O36019"/>
<dbReference type="PRO" id="PR:O36019"/>
<dbReference type="Proteomes" id="UP000002485">
    <property type="component" value="Chromosome I"/>
</dbReference>
<dbReference type="GO" id="GO:1990316">
    <property type="term" value="C:Atg1/ULK1 kinase complex"/>
    <property type="evidence" value="ECO:0000269"/>
    <property type="project" value="PomBase"/>
</dbReference>
<dbReference type="GO" id="GO:0005776">
    <property type="term" value="C:autophagosome"/>
    <property type="evidence" value="ECO:0000318"/>
    <property type="project" value="GO_Central"/>
</dbReference>
<dbReference type="GO" id="GO:0005737">
    <property type="term" value="C:cytoplasm"/>
    <property type="evidence" value="ECO:0007005"/>
    <property type="project" value="PomBase"/>
</dbReference>
<dbReference type="GO" id="GO:0005829">
    <property type="term" value="C:cytosol"/>
    <property type="evidence" value="ECO:0007005"/>
    <property type="project" value="PomBase"/>
</dbReference>
<dbReference type="GO" id="GO:0000407">
    <property type="term" value="C:phagophore assembly site"/>
    <property type="evidence" value="ECO:0000314"/>
    <property type="project" value="PomBase"/>
</dbReference>
<dbReference type="GO" id="GO:0019887">
    <property type="term" value="F:protein kinase regulator activity"/>
    <property type="evidence" value="ECO:0000318"/>
    <property type="project" value="GO_Central"/>
</dbReference>
<dbReference type="GO" id="GO:0000045">
    <property type="term" value="P:autophagosome assembly"/>
    <property type="evidence" value="ECO:0000266"/>
    <property type="project" value="PomBase"/>
</dbReference>
<dbReference type="GO" id="GO:0016236">
    <property type="term" value="P:macroautophagy"/>
    <property type="evidence" value="ECO:0000315"/>
    <property type="project" value="PomBase"/>
</dbReference>
<dbReference type="GO" id="GO:0051321">
    <property type="term" value="P:meiotic cell cycle"/>
    <property type="evidence" value="ECO:0007669"/>
    <property type="project" value="UniProtKB-KW"/>
</dbReference>
<dbReference type="GO" id="GO:0000423">
    <property type="term" value="P:mitophagy"/>
    <property type="evidence" value="ECO:0000315"/>
    <property type="project" value="PomBase"/>
</dbReference>
<dbReference type="GO" id="GO:0034727">
    <property type="term" value="P:piecemeal microautophagy of the nucleus"/>
    <property type="evidence" value="ECO:0000318"/>
    <property type="project" value="GO_Central"/>
</dbReference>
<dbReference type="GO" id="GO:0034497">
    <property type="term" value="P:protein localization to phagophore assembly site"/>
    <property type="evidence" value="ECO:0000318"/>
    <property type="project" value="GO_Central"/>
</dbReference>
<dbReference type="GO" id="GO:0015031">
    <property type="term" value="P:protein transport"/>
    <property type="evidence" value="ECO:0007669"/>
    <property type="project" value="UniProtKB-KW"/>
</dbReference>
<dbReference type="GO" id="GO:0030435">
    <property type="term" value="P:sporulation resulting in formation of a cellular spore"/>
    <property type="evidence" value="ECO:0007669"/>
    <property type="project" value="UniProtKB-KW"/>
</dbReference>
<dbReference type="FunFam" id="3.30.900.10:FF:000013">
    <property type="entry name" value="Autophagy-related protein 13"/>
    <property type="match status" value="1"/>
</dbReference>
<dbReference type="Gene3D" id="3.30.900.10">
    <property type="entry name" value="HORMA domain"/>
    <property type="match status" value="1"/>
</dbReference>
<dbReference type="InterPro" id="IPR040182">
    <property type="entry name" value="ATG13"/>
</dbReference>
<dbReference type="InterPro" id="IPR018731">
    <property type="entry name" value="Atg13_N"/>
</dbReference>
<dbReference type="InterPro" id="IPR036570">
    <property type="entry name" value="HORMA_dom_sf"/>
</dbReference>
<dbReference type="PANTHER" id="PTHR13430">
    <property type="match status" value="1"/>
</dbReference>
<dbReference type="PANTHER" id="PTHR13430:SF4">
    <property type="entry name" value="AUTOPHAGY-RELATED PROTEIN 13"/>
    <property type="match status" value="1"/>
</dbReference>
<dbReference type="Pfam" id="PF10033">
    <property type="entry name" value="ATG13"/>
    <property type="match status" value="1"/>
</dbReference>
<sequence length="758" mass="83710">MPRLNTQLPRMYSAPPGHSKAVSTELNKDLSSVGGRSAKLGQVIHHCFYKTGLIILESRLNVFGTSRPRESSKNNKWFNLEIVETELYAEQFKIWKNIELSPSRKIPPMVLHTYLDISDLSKNQTLSVSDGTHSHAINFNNMSTMKIVLERWIVNLDGEALSTPLELAVLYKKLVVLFRSLYTYTHLMPLWKLKSKIHKLRAHGTSLKVGCALSTDDVLSNDFLPISAPISSSLGSSIATFSFSPVGTPAGDFRISVQYRKNCHFEVHDSDALLSNQLLSADKHQLAASNNSQDFEDGKQYDQPPPSFATRLAKQSDPNSLLQSEIQHLASIESITAQAAPLVTIHPFKSPSLSASPGSNFDNMSISPKVAVNRYIHRGPSATSLNKFSMISDAASKSRAKLPPLTSGSLKLNTLDISNTPNLRRFSSSFGPRERKESFSSRNRLPLVNHPIRSIFKHNVSENPITDHSEHAVYDSEFASKDDLSGFIQLLDSHAHHLNASEGSKSSGSFPGKVQTLTSGISPVAHPHNSLGSSNEIFDIDTYNHSIDNSGSRFTEAVKHNLGNSSHSIMRHHTLGTLRSRPSFSEKSTFPAPLTSISQASTFQGDNRSPSTVIPHTQTEVPSANDTSKQLASLHDMRKSQSPICARSATSAGLPRFEYHTSLSKSLEHSSTPASLQATKTPSPSFVLEPGIPQEYKKHFDNLSEERRQCLTPSTPTYEYYNEHNPNYDDDLLFTMTDMTLEPHDVSAIRLGSPKSDD</sequence>
<protein>
    <recommendedName>
        <fullName>Autophagy protein 13</fullName>
    </recommendedName>
    <alternativeName>
        <fullName>Meiotically up-regulated gene 78 protein</fullName>
    </alternativeName>
</protein>
<comment type="function">
    <text evidence="2 4 5 6 7">Component of the atg1 kinase complex that activates the atg1 kinase in a nutritional condition dependent manner through the TOR pathway, leading to autophagy (PubMed:23950735, PubMed:26030876). Autophagy functions to supply nitrogen and is activated when cells cannot access exogenous nitrogen, thus ensuring that they can adapt and subsequently propagate (PubMed:17295836). Finally, atg13 is also required for glycogen storage during stationary phase and has a role in meiosis and sporulation (PubMed:16303567, PubMed:19778961).</text>
</comment>
<comment type="subunit">
    <text evidence="7 8">Component of the atg1 kinase complex composed of at least atg1, atg13, atg17 and atg101 (PubMed:26030876, PubMed:28976798). Interacts directly with atg1, atg17 and atg101 (PubMed:26030876, PubMed:28976798).</text>
</comment>
<comment type="interaction">
    <interactant intactId="EBI-16158534">
        <id>O36019</id>
    </interactant>
    <interactant intactId="EBI-16158557">
        <id>O13978</id>
        <label>atg101</label>
    </interactant>
    <organismsDiffer>false</organismsDiffer>
    <experiments>6</experiments>
</comment>
<comment type="subcellular location">
    <subcellularLocation>
        <location evidence="3">Cytoplasm</location>
    </subcellularLocation>
    <subcellularLocation>
        <location evidence="6">Preautophagosomal structure</location>
    </subcellularLocation>
</comment>
<comment type="PTM">
    <text evidence="4">Phosphorylated (PubMed:17295836). Dephosphorylated under depletion of nitrogen (PubMed:17295836).</text>
</comment>
<comment type="disruption phenotype">
    <text evidence="6">Impairs atg8-processing.</text>
</comment>
<comment type="similarity">
    <text evidence="9">Belongs to the ATG13 family. Fungi subfamily.</text>
</comment>
<evidence type="ECO:0000256" key="1">
    <source>
        <dbReference type="SAM" id="MobiDB-lite"/>
    </source>
</evidence>
<evidence type="ECO:0000269" key="2">
    <source>
    </source>
</evidence>
<evidence type="ECO:0000269" key="3">
    <source>
    </source>
</evidence>
<evidence type="ECO:0000269" key="4">
    <source>
    </source>
</evidence>
<evidence type="ECO:0000269" key="5">
    <source>
    </source>
</evidence>
<evidence type="ECO:0000269" key="6">
    <source>
    </source>
</evidence>
<evidence type="ECO:0000269" key="7">
    <source>
    </source>
</evidence>
<evidence type="ECO:0000269" key="8">
    <source>
    </source>
</evidence>
<evidence type="ECO:0000305" key="9"/>
<evidence type="ECO:0007744" key="10">
    <source>
        <dbReference type="PDB" id="4YK8"/>
    </source>
</evidence>
<evidence type="ECO:0007829" key="11">
    <source>
        <dbReference type="PDB" id="4YK8"/>
    </source>
</evidence>
<reference key="1">
    <citation type="journal article" date="2002" name="Nature">
        <title>The genome sequence of Schizosaccharomyces pombe.</title>
        <authorList>
            <person name="Wood V."/>
            <person name="Gwilliam R."/>
            <person name="Rajandream M.A."/>
            <person name="Lyne M.H."/>
            <person name="Lyne R."/>
            <person name="Stewart A."/>
            <person name="Sgouros J.G."/>
            <person name="Peat N."/>
            <person name="Hayles J."/>
            <person name="Baker S.G."/>
            <person name="Basham D."/>
            <person name="Bowman S."/>
            <person name="Brooks K."/>
            <person name="Brown D."/>
            <person name="Brown S."/>
            <person name="Chillingworth T."/>
            <person name="Churcher C.M."/>
            <person name="Collins M."/>
            <person name="Connor R."/>
            <person name="Cronin A."/>
            <person name="Davis P."/>
            <person name="Feltwell T."/>
            <person name="Fraser A."/>
            <person name="Gentles S."/>
            <person name="Goble A."/>
            <person name="Hamlin N."/>
            <person name="Harris D.E."/>
            <person name="Hidalgo J."/>
            <person name="Hodgson G."/>
            <person name="Holroyd S."/>
            <person name="Hornsby T."/>
            <person name="Howarth S."/>
            <person name="Huckle E.J."/>
            <person name="Hunt S."/>
            <person name="Jagels K."/>
            <person name="James K.D."/>
            <person name="Jones L."/>
            <person name="Jones M."/>
            <person name="Leather S."/>
            <person name="McDonald S."/>
            <person name="McLean J."/>
            <person name="Mooney P."/>
            <person name="Moule S."/>
            <person name="Mungall K.L."/>
            <person name="Murphy L.D."/>
            <person name="Niblett D."/>
            <person name="Odell C."/>
            <person name="Oliver K."/>
            <person name="O'Neil S."/>
            <person name="Pearson D."/>
            <person name="Quail M.A."/>
            <person name="Rabbinowitsch E."/>
            <person name="Rutherford K.M."/>
            <person name="Rutter S."/>
            <person name="Saunders D."/>
            <person name="Seeger K."/>
            <person name="Sharp S."/>
            <person name="Skelton J."/>
            <person name="Simmonds M.N."/>
            <person name="Squares R."/>
            <person name="Squares S."/>
            <person name="Stevens K."/>
            <person name="Taylor K."/>
            <person name="Taylor R.G."/>
            <person name="Tivey A."/>
            <person name="Walsh S.V."/>
            <person name="Warren T."/>
            <person name="Whitehead S."/>
            <person name="Woodward J.R."/>
            <person name="Volckaert G."/>
            <person name="Aert R."/>
            <person name="Robben J."/>
            <person name="Grymonprez B."/>
            <person name="Weltjens I."/>
            <person name="Vanstreels E."/>
            <person name="Rieger M."/>
            <person name="Schaefer M."/>
            <person name="Mueller-Auer S."/>
            <person name="Gabel C."/>
            <person name="Fuchs M."/>
            <person name="Duesterhoeft A."/>
            <person name="Fritzc C."/>
            <person name="Holzer E."/>
            <person name="Moestl D."/>
            <person name="Hilbert H."/>
            <person name="Borzym K."/>
            <person name="Langer I."/>
            <person name="Beck A."/>
            <person name="Lehrach H."/>
            <person name="Reinhardt R."/>
            <person name="Pohl T.M."/>
            <person name="Eger P."/>
            <person name="Zimmermann W."/>
            <person name="Wedler H."/>
            <person name="Wambutt R."/>
            <person name="Purnelle B."/>
            <person name="Goffeau A."/>
            <person name="Cadieu E."/>
            <person name="Dreano S."/>
            <person name="Gloux S."/>
            <person name="Lelaure V."/>
            <person name="Mottier S."/>
            <person name="Galibert F."/>
            <person name="Aves S.J."/>
            <person name="Xiang Z."/>
            <person name="Hunt C."/>
            <person name="Moore K."/>
            <person name="Hurst S.M."/>
            <person name="Lucas M."/>
            <person name="Rochet M."/>
            <person name="Gaillardin C."/>
            <person name="Tallada V.A."/>
            <person name="Garzon A."/>
            <person name="Thode G."/>
            <person name="Daga R.R."/>
            <person name="Cruzado L."/>
            <person name="Jimenez J."/>
            <person name="Sanchez M."/>
            <person name="del Rey F."/>
            <person name="Benito J."/>
            <person name="Dominguez A."/>
            <person name="Revuelta J.L."/>
            <person name="Moreno S."/>
            <person name="Armstrong J."/>
            <person name="Forsburg S.L."/>
            <person name="Cerutti L."/>
            <person name="Lowe T."/>
            <person name="McCombie W.R."/>
            <person name="Paulsen I."/>
            <person name="Potashkin J."/>
            <person name="Shpakovski G.V."/>
            <person name="Ussery D."/>
            <person name="Barrell B.G."/>
            <person name="Nurse P."/>
        </authorList>
    </citation>
    <scope>NUCLEOTIDE SEQUENCE [LARGE SCALE GENOMIC DNA]</scope>
    <source>
        <strain>972 / ATCC 24843</strain>
    </source>
</reference>
<reference key="2">
    <citation type="journal article" date="2000" name="Genes Cells">
        <title>Large-scale screening of intracellular protein localization in living fission yeast cells by the use of a GFP-fusion genomic DNA library.</title>
        <authorList>
            <person name="Ding D.-Q."/>
            <person name="Tomita Y."/>
            <person name="Yamamoto A."/>
            <person name="Chikashige Y."/>
            <person name="Haraguchi T."/>
            <person name="Hiraoka Y."/>
        </authorList>
    </citation>
    <scope>NUCLEOTIDE SEQUENCE [LARGE SCALE GENOMIC DNA] OF 108-302</scope>
    <source>
        <strain>ATCC 38364 / 968</strain>
    </source>
</reference>
<reference key="3">
    <citation type="journal article" date="2005" name="Curr. Biol.">
        <title>A large-scale screen in S. pombe identifies seven novel genes required for critical meiotic events.</title>
        <authorList>
            <person name="Martin-Castellanos C."/>
            <person name="Blanco M."/>
            <person name="Rozalen A.E."/>
            <person name="Perez-Hidalgo L."/>
            <person name="Garcia A.I."/>
            <person name="Conde F."/>
            <person name="Mata J."/>
            <person name="Ellermeier C."/>
            <person name="Davis L."/>
            <person name="San-Segundo P."/>
            <person name="Smith G.R."/>
            <person name="Moreno S."/>
        </authorList>
    </citation>
    <scope>FUNCTION IN MEIOSIS/SPORULATION</scope>
</reference>
<reference key="4">
    <citation type="journal article" date="2006" name="Nat. Biotechnol.">
        <title>ORFeome cloning and global analysis of protein localization in the fission yeast Schizosaccharomyces pombe.</title>
        <authorList>
            <person name="Matsuyama A."/>
            <person name="Arai R."/>
            <person name="Yashiroda Y."/>
            <person name="Shirai A."/>
            <person name="Kamata A."/>
            <person name="Sekido S."/>
            <person name="Kobayashi Y."/>
            <person name="Hashimoto A."/>
            <person name="Hamamoto M."/>
            <person name="Hiraoka Y."/>
            <person name="Horinouchi S."/>
            <person name="Yoshida M."/>
        </authorList>
    </citation>
    <scope>SUBCELLULAR LOCATION [LARGE SCALE ANALYSIS]</scope>
</reference>
<reference key="5">
    <citation type="journal article" date="2007" name="Genes Cells">
        <title>Fission yeast autophagy induced by nitrogen starvation generates a nitrogen source that drives adaptation processes.</title>
        <authorList>
            <person name="Kohda T.A."/>
            <person name="Tanaka K."/>
            <person name="Konomi M."/>
            <person name="Sato M."/>
            <person name="Osumi M."/>
            <person name="Yamamoto M."/>
        </authorList>
    </citation>
    <scope>FUNCTION</scope>
    <scope>PHOSPHORYLATION</scope>
    <scope>DEPHOSPHORYLATION</scope>
</reference>
<reference key="6">
    <citation type="journal article" date="2009" name="Microbiology">
        <title>Autophagy-deficient Schizosaccharomyces pombe mutants undergo partial sporulation during nitrogen starvation.</title>
        <authorList>
            <person name="Mukaiyama H."/>
            <person name="Kajiwara S."/>
            <person name="Hosomi A."/>
            <person name="Giga-Hama Y."/>
            <person name="Tanaka N."/>
            <person name="Nakamura T."/>
            <person name="Takegawa K."/>
        </authorList>
    </citation>
    <scope>FUNCTION</scope>
</reference>
<reference key="7">
    <citation type="journal article" date="2013" name="PLoS Genet.">
        <title>Global analysis of fission yeast mating genes reveals new autophagy factors.</title>
        <authorList>
            <person name="Sun L.L."/>
            <person name="Li M."/>
            <person name="Suo F."/>
            <person name="Liu X.M."/>
            <person name="Shen E.Z."/>
            <person name="Yang B."/>
            <person name="Dong M.Q."/>
            <person name="He W.Z."/>
            <person name="Du L.L."/>
        </authorList>
    </citation>
    <scope>FUNCTION</scope>
    <scope>DISRUPTION PHENOTYPE</scope>
    <scope>SUBCELLULAR LOCATION</scope>
</reference>
<reference key="8">
    <citation type="journal article" date="2017" name="Autophagy">
        <title>Conserved and unique features of the fission yeast core Atg1 complex.</title>
        <authorList>
            <person name="Nanji T."/>
            <person name="Liu X."/>
            <person name="Chew L.H."/>
            <person name="Li F.K."/>
            <person name="Biswas M."/>
            <person name="Yu Z.Q."/>
            <person name="Lu S."/>
            <person name="Dong M.Q."/>
            <person name="Du L.L."/>
            <person name="Klionsky D.J."/>
            <person name="Yip C.K."/>
        </authorList>
    </citation>
    <scope>SUBUNIT</scope>
    <scope>INTERACTION WITH ATG1 AND ATG17</scope>
</reference>
<reference evidence="10" key="9">
    <citation type="journal article" date="2015" name="Nat. Struct. Mol. Biol.">
        <title>Structure of the Atg101-Atg13 complex reveals essential roles of Atg101 in autophagy initiation.</title>
        <authorList>
            <person name="Suzuki H."/>
            <person name="Kaizuka T."/>
            <person name="Mizushima N."/>
            <person name="Noda N.N."/>
        </authorList>
    </citation>
    <scope>X-RAY CRYSTALLOGRAPHY (3.00 ANGSTROMS) OF 32-269 IN COMPLEX WITH ATG101</scope>
    <scope>FUNCTION</scope>
    <scope>SUBUNIT</scope>
    <scope>INTERACTION WITH ATG101</scope>
    <scope>MUTAGENESIS OF THR-183 AND LEU-187</scope>
</reference>
<name>ATG13_SCHPO</name>
<gene>
    <name type="primary">atg13</name>
    <name type="synonym">mug78</name>
    <name type="ORF">SPAC4F10.07c</name>
</gene>
<proteinExistence type="evidence at protein level"/>
<accession>O36019</accession>
<accession>Q9USA3</accession>
<keyword id="KW-0002">3D-structure</keyword>
<keyword id="KW-0072">Autophagy</keyword>
<keyword id="KW-0963">Cytoplasm</keyword>
<keyword id="KW-0469">Meiosis</keyword>
<keyword id="KW-0597">Phosphoprotein</keyword>
<keyword id="KW-0653">Protein transport</keyword>
<keyword id="KW-1185">Reference proteome</keyword>
<keyword id="KW-0749">Sporulation</keyword>
<keyword id="KW-0813">Transport</keyword>